<proteinExistence type="inferred from homology"/>
<sequence length="193" mass="21251">MRLCDRDIEAWLDEGRLSINPRPPVERINGATVDVRLGNKFRTFRGHTAAFIDLSGPKDEVSAALDRVMSDEIVLDESEAFYLHPGELALAVTLESVTLPADLVGWLDGRSSLARLGLMVHVTAHRIDPGWSGCIVLEFYNSGKLPLALRPGMLIGALSFEPLSGPAARPYNRREDAKYRNQQGAVASRIDKD</sequence>
<gene>
    <name evidence="1" type="primary">dcd</name>
    <name type="ordered locus">c2592</name>
</gene>
<dbReference type="EC" id="3.5.4.13" evidence="1"/>
<dbReference type="EMBL" id="AE014075">
    <property type="protein sequence ID" value="AAN81048.1"/>
    <property type="molecule type" value="Genomic_DNA"/>
</dbReference>
<dbReference type="RefSeq" id="WP_001234777.1">
    <property type="nucleotide sequence ID" value="NZ_CP051263.1"/>
</dbReference>
<dbReference type="SMR" id="P63901"/>
<dbReference type="STRING" id="199310.c2592"/>
<dbReference type="KEGG" id="ecc:c2592"/>
<dbReference type="eggNOG" id="COG0717">
    <property type="taxonomic scope" value="Bacteria"/>
</dbReference>
<dbReference type="HOGENOM" id="CLU_087476_2_0_6"/>
<dbReference type="BioCyc" id="ECOL199310:C2592-MONOMER"/>
<dbReference type="UniPathway" id="UPA00610">
    <property type="reaction ID" value="UER00665"/>
</dbReference>
<dbReference type="Proteomes" id="UP000001410">
    <property type="component" value="Chromosome"/>
</dbReference>
<dbReference type="GO" id="GO:0008829">
    <property type="term" value="F:dCTP deaminase activity"/>
    <property type="evidence" value="ECO:0007669"/>
    <property type="project" value="UniProtKB-UniRule"/>
</dbReference>
<dbReference type="GO" id="GO:0000166">
    <property type="term" value="F:nucleotide binding"/>
    <property type="evidence" value="ECO:0007669"/>
    <property type="project" value="UniProtKB-KW"/>
</dbReference>
<dbReference type="GO" id="GO:0006226">
    <property type="term" value="P:dUMP biosynthetic process"/>
    <property type="evidence" value="ECO:0007669"/>
    <property type="project" value="UniProtKB-UniPathway"/>
</dbReference>
<dbReference type="GO" id="GO:0006229">
    <property type="term" value="P:dUTP biosynthetic process"/>
    <property type="evidence" value="ECO:0007669"/>
    <property type="project" value="UniProtKB-UniRule"/>
</dbReference>
<dbReference type="GO" id="GO:0015949">
    <property type="term" value="P:nucleobase-containing small molecule interconversion"/>
    <property type="evidence" value="ECO:0007669"/>
    <property type="project" value="TreeGrafter"/>
</dbReference>
<dbReference type="CDD" id="cd07557">
    <property type="entry name" value="trimeric_dUTPase"/>
    <property type="match status" value="1"/>
</dbReference>
<dbReference type="FunFam" id="2.70.40.10:FF:000003">
    <property type="entry name" value="dCTP deaminase"/>
    <property type="match status" value="1"/>
</dbReference>
<dbReference type="Gene3D" id="2.70.40.10">
    <property type="match status" value="1"/>
</dbReference>
<dbReference type="HAMAP" id="MF_00146">
    <property type="entry name" value="dCTP_deaminase"/>
    <property type="match status" value="1"/>
</dbReference>
<dbReference type="InterPro" id="IPR011962">
    <property type="entry name" value="dCTP_deaminase"/>
</dbReference>
<dbReference type="InterPro" id="IPR036157">
    <property type="entry name" value="dUTPase-like_sf"/>
</dbReference>
<dbReference type="InterPro" id="IPR033704">
    <property type="entry name" value="dUTPase_trimeric"/>
</dbReference>
<dbReference type="NCBIfam" id="TIGR02274">
    <property type="entry name" value="dCTP_deam"/>
    <property type="match status" value="1"/>
</dbReference>
<dbReference type="PANTHER" id="PTHR42680">
    <property type="entry name" value="DCTP DEAMINASE"/>
    <property type="match status" value="1"/>
</dbReference>
<dbReference type="PANTHER" id="PTHR42680:SF3">
    <property type="entry name" value="DCTP DEAMINASE"/>
    <property type="match status" value="1"/>
</dbReference>
<dbReference type="Pfam" id="PF22769">
    <property type="entry name" value="DCD"/>
    <property type="match status" value="1"/>
</dbReference>
<dbReference type="SUPFAM" id="SSF51283">
    <property type="entry name" value="dUTPase-like"/>
    <property type="match status" value="1"/>
</dbReference>
<organism>
    <name type="scientific">Escherichia coli O6:H1 (strain CFT073 / ATCC 700928 / UPEC)</name>
    <dbReference type="NCBI Taxonomy" id="199310"/>
    <lineage>
        <taxon>Bacteria</taxon>
        <taxon>Pseudomonadati</taxon>
        <taxon>Pseudomonadota</taxon>
        <taxon>Gammaproteobacteria</taxon>
        <taxon>Enterobacterales</taxon>
        <taxon>Enterobacteriaceae</taxon>
        <taxon>Escherichia</taxon>
    </lineage>
</organism>
<reference key="1">
    <citation type="journal article" date="2002" name="Proc. Natl. Acad. Sci. U.S.A.">
        <title>Extensive mosaic structure revealed by the complete genome sequence of uropathogenic Escherichia coli.</title>
        <authorList>
            <person name="Welch R.A."/>
            <person name="Burland V."/>
            <person name="Plunkett G. III"/>
            <person name="Redford P."/>
            <person name="Roesch P."/>
            <person name="Rasko D."/>
            <person name="Buckles E.L."/>
            <person name="Liou S.-R."/>
            <person name="Boutin A."/>
            <person name="Hackett J."/>
            <person name="Stroud D."/>
            <person name="Mayhew G.F."/>
            <person name="Rose D.J."/>
            <person name="Zhou S."/>
            <person name="Schwartz D.C."/>
            <person name="Perna N.T."/>
            <person name="Mobley H.L.T."/>
            <person name="Donnenberg M.S."/>
            <person name="Blattner F.R."/>
        </authorList>
    </citation>
    <scope>NUCLEOTIDE SEQUENCE [LARGE SCALE GENOMIC DNA]</scope>
    <source>
        <strain>CFT073 / ATCC 700928 / UPEC</strain>
    </source>
</reference>
<feature type="chain" id="PRO_0000155985" description="dCTP deaminase">
    <location>
        <begin position="1"/>
        <end position="193"/>
    </location>
</feature>
<feature type="region of interest" description="Disordered" evidence="2">
    <location>
        <begin position="169"/>
        <end position="193"/>
    </location>
</feature>
<feature type="active site" description="Proton donor/acceptor" evidence="1">
    <location>
        <position position="138"/>
    </location>
</feature>
<feature type="binding site" evidence="1">
    <location>
        <begin position="110"/>
        <end position="115"/>
    </location>
    <ligand>
        <name>dCTP</name>
        <dbReference type="ChEBI" id="CHEBI:61481"/>
    </ligand>
</feature>
<feature type="binding site" evidence="1">
    <location>
        <position position="128"/>
    </location>
    <ligand>
        <name>dCTP</name>
        <dbReference type="ChEBI" id="CHEBI:61481"/>
    </ligand>
</feature>
<feature type="binding site" evidence="1">
    <location>
        <begin position="136"/>
        <end position="138"/>
    </location>
    <ligand>
        <name>dCTP</name>
        <dbReference type="ChEBI" id="CHEBI:61481"/>
    </ligand>
</feature>
<feature type="binding site" evidence="1">
    <location>
        <position position="171"/>
    </location>
    <ligand>
        <name>dCTP</name>
        <dbReference type="ChEBI" id="CHEBI:61481"/>
    </ligand>
</feature>
<feature type="binding site" evidence="1">
    <location>
        <position position="178"/>
    </location>
    <ligand>
        <name>dCTP</name>
        <dbReference type="ChEBI" id="CHEBI:61481"/>
    </ligand>
</feature>
<feature type="binding site" evidence="1">
    <location>
        <position position="182"/>
    </location>
    <ligand>
        <name>dCTP</name>
        <dbReference type="ChEBI" id="CHEBI:61481"/>
    </ligand>
</feature>
<keyword id="KW-0378">Hydrolase</keyword>
<keyword id="KW-0546">Nucleotide metabolism</keyword>
<keyword id="KW-0547">Nucleotide-binding</keyword>
<keyword id="KW-1185">Reference proteome</keyword>
<protein>
    <recommendedName>
        <fullName evidence="1">dCTP deaminase</fullName>
        <ecNumber evidence="1">3.5.4.13</ecNumber>
    </recommendedName>
    <alternativeName>
        <fullName evidence="1">Deoxycytidine triphosphate deaminase</fullName>
    </alternativeName>
</protein>
<comment type="function">
    <text evidence="1">Catalyzes the deamination of dCTP to dUTP.</text>
</comment>
<comment type="catalytic activity">
    <reaction evidence="1">
        <text>dCTP + H2O + H(+) = dUTP + NH4(+)</text>
        <dbReference type="Rhea" id="RHEA:22680"/>
        <dbReference type="ChEBI" id="CHEBI:15377"/>
        <dbReference type="ChEBI" id="CHEBI:15378"/>
        <dbReference type="ChEBI" id="CHEBI:28938"/>
        <dbReference type="ChEBI" id="CHEBI:61481"/>
        <dbReference type="ChEBI" id="CHEBI:61555"/>
        <dbReference type="EC" id="3.5.4.13"/>
    </reaction>
</comment>
<comment type="pathway">
    <text evidence="1">Pyrimidine metabolism; dUMP biosynthesis; dUMP from dCTP (dUTP route): step 1/2.</text>
</comment>
<comment type="subunit">
    <text evidence="1">Homotrimer.</text>
</comment>
<comment type="similarity">
    <text evidence="1">Belongs to the dCTP deaminase family.</text>
</comment>
<accession>P63901</accession>
<accession>Q8X7L4</accession>
<name>DCD_ECOL6</name>
<evidence type="ECO:0000255" key="1">
    <source>
        <dbReference type="HAMAP-Rule" id="MF_00146"/>
    </source>
</evidence>
<evidence type="ECO:0000256" key="2">
    <source>
        <dbReference type="SAM" id="MobiDB-lite"/>
    </source>
</evidence>